<gene>
    <name evidence="1" type="primary">rpsM</name>
    <name type="ordered locus">NTHI0962</name>
</gene>
<sequence length="118" mass="13265">MARIAGINIPDHKHAVIALTAIYGIGKTRSQAICAAAGIAEDVKIRELSEEQIDKLRDEVGKFTVEGDLRREVTLNIKRLLDLGCYRGLRHRRSLPVRGQRTKTNARTRKGPRKPIKK</sequence>
<dbReference type="EMBL" id="CP000057">
    <property type="protein sequence ID" value="AAX87847.1"/>
    <property type="molecule type" value="Genomic_DNA"/>
</dbReference>
<dbReference type="RefSeq" id="WP_005648406.1">
    <property type="nucleotide sequence ID" value="NC_007146.2"/>
</dbReference>
<dbReference type="SMR" id="Q4QMA0"/>
<dbReference type="GeneID" id="93219840"/>
<dbReference type="KEGG" id="hit:NTHI0962"/>
<dbReference type="HOGENOM" id="CLU_103849_1_2_6"/>
<dbReference type="Proteomes" id="UP000002525">
    <property type="component" value="Chromosome"/>
</dbReference>
<dbReference type="GO" id="GO:0005829">
    <property type="term" value="C:cytosol"/>
    <property type="evidence" value="ECO:0007669"/>
    <property type="project" value="TreeGrafter"/>
</dbReference>
<dbReference type="GO" id="GO:0015935">
    <property type="term" value="C:small ribosomal subunit"/>
    <property type="evidence" value="ECO:0007669"/>
    <property type="project" value="TreeGrafter"/>
</dbReference>
<dbReference type="GO" id="GO:0019843">
    <property type="term" value="F:rRNA binding"/>
    <property type="evidence" value="ECO:0007669"/>
    <property type="project" value="UniProtKB-UniRule"/>
</dbReference>
<dbReference type="GO" id="GO:0003735">
    <property type="term" value="F:structural constituent of ribosome"/>
    <property type="evidence" value="ECO:0007669"/>
    <property type="project" value="InterPro"/>
</dbReference>
<dbReference type="GO" id="GO:0000049">
    <property type="term" value="F:tRNA binding"/>
    <property type="evidence" value="ECO:0007669"/>
    <property type="project" value="UniProtKB-UniRule"/>
</dbReference>
<dbReference type="GO" id="GO:0006412">
    <property type="term" value="P:translation"/>
    <property type="evidence" value="ECO:0007669"/>
    <property type="project" value="UniProtKB-UniRule"/>
</dbReference>
<dbReference type="FunFam" id="1.10.8.50:FF:000001">
    <property type="entry name" value="30S ribosomal protein S13"/>
    <property type="match status" value="1"/>
</dbReference>
<dbReference type="FunFam" id="4.10.910.10:FF:000001">
    <property type="entry name" value="30S ribosomal protein S13"/>
    <property type="match status" value="1"/>
</dbReference>
<dbReference type="Gene3D" id="1.10.8.50">
    <property type="match status" value="1"/>
</dbReference>
<dbReference type="Gene3D" id="4.10.910.10">
    <property type="entry name" value="30s ribosomal protein s13, domain 2"/>
    <property type="match status" value="1"/>
</dbReference>
<dbReference type="HAMAP" id="MF_01315">
    <property type="entry name" value="Ribosomal_uS13"/>
    <property type="match status" value="1"/>
</dbReference>
<dbReference type="InterPro" id="IPR027437">
    <property type="entry name" value="Rbsml_uS13_C"/>
</dbReference>
<dbReference type="InterPro" id="IPR001892">
    <property type="entry name" value="Ribosomal_uS13"/>
</dbReference>
<dbReference type="InterPro" id="IPR010979">
    <property type="entry name" value="Ribosomal_uS13-like_H2TH"/>
</dbReference>
<dbReference type="InterPro" id="IPR019980">
    <property type="entry name" value="Ribosomal_uS13_bac-type"/>
</dbReference>
<dbReference type="InterPro" id="IPR018269">
    <property type="entry name" value="Ribosomal_uS13_CS"/>
</dbReference>
<dbReference type="NCBIfam" id="TIGR03631">
    <property type="entry name" value="uS13_bact"/>
    <property type="match status" value="1"/>
</dbReference>
<dbReference type="PANTHER" id="PTHR10871">
    <property type="entry name" value="30S RIBOSOMAL PROTEIN S13/40S RIBOSOMAL PROTEIN S18"/>
    <property type="match status" value="1"/>
</dbReference>
<dbReference type="PANTHER" id="PTHR10871:SF1">
    <property type="entry name" value="SMALL RIBOSOMAL SUBUNIT PROTEIN US13M"/>
    <property type="match status" value="1"/>
</dbReference>
<dbReference type="Pfam" id="PF00416">
    <property type="entry name" value="Ribosomal_S13"/>
    <property type="match status" value="1"/>
</dbReference>
<dbReference type="PIRSF" id="PIRSF002134">
    <property type="entry name" value="Ribosomal_S13"/>
    <property type="match status" value="1"/>
</dbReference>
<dbReference type="SUPFAM" id="SSF46946">
    <property type="entry name" value="S13-like H2TH domain"/>
    <property type="match status" value="1"/>
</dbReference>
<dbReference type="PROSITE" id="PS00646">
    <property type="entry name" value="RIBOSOMAL_S13_1"/>
    <property type="match status" value="1"/>
</dbReference>
<dbReference type="PROSITE" id="PS50159">
    <property type="entry name" value="RIBOSOMAL_S13_2"/>
    <property type="match status" value="1"/>
</dbReference>
<reference key="1">
    <citation type="journal article" date="2005" name="J. Bacteriol.">
        <title>Genomic sequence of an otitis media isolate of nontypeable Haemophilus influenzae: comparative study with H. influenzae serotype d, strain KW20.</title>
        <authorList>
            <person name="Harrison A."/>
            <person name="Dyer D.W."/>
            <person name="Gillaspy A."/>
            <person name="Ray W.C."/>
            <person name="Mungur R."/>
            <person name="Carson M.B."/>
            <person name="Zhong H."/>
            <person name="Gipson J."/>
            <person name="Gipson M."/>
            <person name="Johnson L.S."/>
            <person name="Lewis L."/>
            <person name="Bakaletz L.O."/>
            <person name="Munson R.S. Jr."/>
        </authorList>
    </citation>
    <scope>NUCLEOTIDE SEQUENCE [LARGE SCALE GENOMIC DNA]</scope>
    <source>
        <strain>86-028NP</strain>
    </source>
</reference>
<accession>Q4QMA0</accession>
<evidence type="ECO:0000255" key="1">
    <source>
        <dbReference type="HAMAP-Rule" id="MF_01315"/>
    </source>
</evidence>
<evidence type="ECO:0000256" key="2">
    <source>
        <dbReference type="SAM" id="MobiDB-lite"/>
    </source>
</evidence>
<evidence type="ECO:0000305" key="3"/>
<comment type="function">
    <text evidence="1">Located at the top of the head of the 30S subunit, it contacts several helices of the 16S rRNA. In the 70S ribosome it contacts the 23S rRNA (bridge B1a) and protein L5 of the 50S subunit (bridge B1b), connecting the 2 subunits; these bridges are implicated in subunit movement. Contacts the tRNAs in the A and P-sites.</text>
</comment>
<comment type="subunit">
    <text evidence="1">Part of the 30S ribosomal subunit. Forms a loose heterodimer with protein S19. Forms two bridges to the 50S subunit in the 70S ribosome.</text>
</comment>
<comment type="similarity">
    <text evidence="1">Belongs to the universal ribosomal protein uS13 family.</text>
</comment>
<keyword id="KW-0687">Ribonucleoprotein</keyword>
<keyword id="KW-0689">Ribosomal protein</keyword>
<keyword id="KW-0694">RNA-binding</keyword>
<keyword id="KW-0699">rRNA-binding</keyword>
<keyword id="KW-0820">tRNA-binding</keyword>
<protein>
    <recommendedName>
        <fullName evidence="1">Small ribosomal subunit protein uS13</fullName>
    </recommendedName>
    <alternativeName>
        <fullName evidence="3">30S ribosomal protein S13</fullName>
    </alternativeName>
</protein>
<proteinExistence type="inferred from homology"/>
<name>RS13_HAEI8</name>
<organism>
    <name type="scientific">Haemophilus influenzae (strain 86-028NP)</name>
    <dbReference type="NCBI Taxonomy" id="281310"/>
    <lineage>
        <taxon>Bacteria</taxon>
        <taxon>Pseudomonadati</taxon>
        <taxon>Pseudomonadota</taxon>
        <taxon>Gammaproteobacteria</taxon>
        <taxon>Pasteurellales</taxon>
        <taxon>Pasteurellaceae</taxon>
        <taxon>Haemophilus</taxon>
    </lineage>
</organism>
<feature type="chain" id="PRO_0000230513" description="Small ribosomal subunit protein uS13">
    <location>
        <begin position="1"/>
        <end position="118"/>
    </location>
</feature>
<feature type="region of interest" description="Disordered" evidence="2">
    <location>
        <begin position="94"/>
        <end position="118"/>
    </location>
</feature>